<evidence type="ECO:0000269" key="1">
    <source>
    </source>
</evidence>
<evidence type="ECO:0000269" key="2">
    <source>
    </source>
</evidence>
<evidence type="ECO:0000305" key="3"/>
<evidence type="ECO:0007829" key="4">
    <source>
        <dbReference type="PDB" id="1X7K"/>
    </source>
</evidence>
<evidence type="ECO:0007829" key="5">
    <source>
        <dbReference type="PDB" id="6PI2"/>
    </source>
</evidence>
<dbReference type="PIR" id="JU0124">
    <property type="entry name" value="JU0124"/>
</dbReference>
<dbReference type="PDB" id="1RKK">
    <property type="method" value="NMR"/>
    <property type="chains" value="A=1-18"/>
</dbReference>
<dbReference type="PDB" id="1X7K">
    <property type="method" value="NMR"/>
    <property type="chains" value="A=1-18"/>
</dbReference>
<dbReference type="PDB" id="2B5K">
    <property type="method" value="NMR"/>
    <property type="chains" value="A=1-18"/>
</dbReference>
<dbReference type="PDB" id="6PI2">
    <property type="method" value="NMR"/>
    <property type="chains" value="A=2-18"/>
</dbReference>
<dbReference type="PDBsum" id="1RKK"/>
<dbReference type="PDBsum" id="1X7K"/>
<dbReference type="PDBsum" id="2B5K"/>
<dbReference type="PDBsum" id="6PI2"/>
<dbReference type="BMRB" id="P14215"/>
<dbReference type="SMR" id="P14215"/>
<dbReference type="TCDB" id="1.C.34.2.1">
    <property type="family name" value="the tachyplesin (tachyplesin) family"/>
</dbReference>
<dbReference type="EvolutionaryTrace" id="P14215"/>
<dbReference type="Proteomes" id="UP000694941">
    <property type="component" value="Unplaced"/>
</dbReference>
<dbReference type="GO" id="GO:0005576">
    <property type="term" value="C:extracellular region"/>
    <property type="evidence" value="ECO:0007669"/>
    <property type="project" value="UniProtKB-SubCell"/>
</dbReference>
<dbReference type="GO" id="GO:0042742">
    <property type="term" value="P:defense response to bacterium"/>
    <property type="evidence" value="ECO:0007669"/>
    <property type="project" value="UniProtKB-KW"/>
</dbReference>
<sequence length="18" mass="2459">RRWCFRVCYRGFCYRKCR</sequence>
<comment type="function">
    <text>Significantly inhibits the growth of Gram-negative and Gram-positive bacteria.</text>
</comment>
<comment type="subcellular location">
    <subcellularLocation>
        <location>Secreted</location>
    </subcellularLocation>
</comment>
<comment type="tissue specificity">
    <text>Hemocytes.</text>
</comment>
<comment type="similarity">
    <text evidence="3">Belongs to the tachyplesin/polyphemusin family.</text>
</comment>
<proteinExistence type="evidence at protein level"/>
<reference key="1">
    <citation type="journal article" date="1989" name="J. Biochem.">
        <title>Antimicrobial peptides, isolated from horseshoe crab hemocytes, tachyplesin II, and polyphemusins I and II: chemical structures and biological activity.</title>
        <authorList>
            <person name="Miyata T."/>
            <person name="Tokunaga F."/>
            <person name="Yonega T."/>
            <person name="Yoshikawa K."/>
            <person name="Iwanaga S."/>
            <person name="Niwa M."/>
            <person name="Takao T."/>
            <person name="Shimonishi Y."/>
        </authorList>
    </citation>
    <scope>PROTEIN SEQUENCE</scope>
    <scope>DISULFIDE BONDS</scope>
</reference>
<reference key="2">
    <citation type="journal article" date="2004" name="Biochim. Biophys. Acta">
        <title>Structure-activity relationships for the beta-hairpin cationic antimicrobial peptide polyphemusin I.</title>
        <authorList>
            <person name="Powers J.P."/>
            <person name="Rozek A."/>
            <person name="Hancock R.E."/>
        </authorList>
    </citation>
    <scope>STRUCTURE BY NMR</scope>
    <scope>DISULFIDE BONDS</scope>
    <scope>AMIDATION AT ARG-18</scope>
</reference>
<organism>
    <name type="scientific">Limulus polyphemus</name>
    <name type="common">Atlantic horseshoe crab</name>
    <dbReference type="NCBI Taxonomy" id="6850"/>
    <lineage>
        <taxon>Eukaryota</taxon>
        <taxon>Metazoa</taxon>
        <taxon>Ecdysozoa</taxon>
        <taxon>Arthropoda</taxon>
        <taxon>Chelicerata</taxon>
        <taxon>Merostomata</taxon>
        <taxon>Xiphosura</taxon>
        <taxon>Limulidae</taxon>
        <taxon>Limulus</taxon>
    </lineage>
</organism>
<accession>P14215</accession>
<keyword id="KW-0002">3D-structure</keyword>
<keyword id="KW-0027">Amidation</keyword>
<keyword id="KW-0044">Antibiotic</keyword>
<keyword id="KW-0929">Antimicrobial</keyword>
<keyword id="KW-0903">Direct protein sequencing</keyword>
<keyword id="KW-1015">Disulfide bond</keyword>
<keyword id="KW-0964">Secreted</keyword>
<protein>
    <recommendedName>
        <fullName>Polyphemusin-1</fullName>
    </recommendedName>
    <alternativeName>
        <fullName>Polyphemusin I</fullName>
    </alternativeName>
</protein>
<name>PPM1_LIMPO</name>
<feature type="peptide" id="PRO_0000044452" description="Polyphemusin-1">
    <location>
        <begin position="1"/>
        <end position="18"/>
    </location>
</feature>
<feature type="modified residue" description="Arginine amide" evidence="1 2">
    <location>
        <position position="18"/>
    </location>
</feature>
<feature type="disulfide bond" evidence="2">
    <location>
        <begin position="4"/>
        <end position="17"/>
    </location>
</feature>
<feature type="disulfide bond" evidence="2">
    <location>
        <begin position="8"/>
        <end position="13"/>
    </location>
</feature>
<feature type="strand" evidence="4">
    <location>
        <begin position="7"/>
        <end position="11"/>
    </location>
</feature>
<feature type="strand" evidence="5">
    <location>
        <begin position="12"/>
        <end position="18"/>
    </location>
</feature>